<organism>
    <name type="scientific">Sodalis glossinidius (strain morsitans)</name>
    <dbReference type="NCBI Taxonomy" id="343509"/>
    <lineage>
        <taxon>Bacteria</taxon>
        <taxon>Pseudomonadati</taxon>
        <taxon>Pseudomonadota</taxon>
        <taxon>Gammaproteobacteria</taxon>
        <taxon>Enterobacterales</taxon>
        <taxon>Bruguierivoracaceae</taxon>
        <taxon>Sodalis</taxon>
    </lineage>
</organism>
<sequence length="239" mass="25757">MIALAGQTPDVIAILPAAGIGSRMQTALPKQYLTIGNKTLLEHAIDALLCHPCISEAVVAISAEDRWFYQLPVAADPRVRVVTGGSVRADSVMAALRCASAASWVLVHDAARPCLHQDDLRRLLVITAHTEVGGLLATPVRDTMKRAHTGSDIIAATVEREDLWHALTPQLFARDLLITCLERALAEGATVTDEASALEYCGYAPLLVPGRVDNIKVTRPEDLALARFFFSQLANTESV</sequence>
<reference key="1">
    <citation type="journal article" date="2006" name="Genome Res.">
        <title>Massive genome erosion and functional adaptations provide insights into the symbiotic lifestyle of Sodalis glossinidius in the tsetse host.</title>
        <authorList>
            <person name="Toh H."/>
            <person name="Weiss B.L."/>
            <person name="Perkin S.A.H."/>
            <person name="Yamashita A."/>
            <person name="Oshima K."/>
            <person name="Hattori M."/>
            <person name="Aksoy S."/>
        </authorList>
    </citation>
    <scope>NUCLEOTIDE SEQUENCE [LARGE SCALE GENOMIC DNA]</scope>
    <source>
        <strain>morsitans</strain>
    </source>
</reference>
<accession>Q2NVM4</accession>
<dbReference type="EC" id="2.7.7.60" evidence="1"/>
<dbReference type="EMBL" id="AP008232">
    <property type="protein sequence ID" value="BAE73801.1"/>
    <property type="molecule type" value="Genomic_DNA"/>
</dbReference>
<dbReference type="RefSeq" id="WP_011410499.1">
    <property type="nucleotide sequence ID" value="NC_007712.1"/>
</dbReference>
<dbReference type="SMR" id="Q2NVM4"/>
<dbReference type="STRING" id="343509.SG0526"/>
<dbReference type="KEGG" id="sgl:SG0526"/>
<dbReference type="eggNOG" id="COG1211">
    <property type="taxonomic scope" value="Bacteria"/>
</dbReference>
<dbReference type="HOGENOM" id="CLU_061281_3_1_6"/>
<dbReference type="OrthoDB" id="9806837at2"/>
<dbReference type="BioCyc" id="SGLO343509:SGP1_RS04650-MONOMER"/>
<dbReference type="UniPathway" id="UPA00056">
    <property type="reaction ID" value="UER00093"/>
</dbReference>
<dbReference type="Proteomes" id="UP000001932">
    <property type="component" value="Chromosome"/>
</dbReference>
<dbReference type="GO" id="GO:0050518">
    <property type="term" value="F:2-C-methyl-D-erythritol 4-phosphate cytidylyltransferase activity"/>
    <property type="evidence" value="ECO:0007669"/>
    <property type="project" value="UniProtKB-UniRule"/>
</dbReference>
<dbReference type="GO" id="GO:0019288">
    <property type="term" value="P:isopentenyl diphosphate biosynthetic process, methylerythritol 4-phosphate pathway"/>
    <property type="evidence" value="ECO:0007669"/>
    <property type="project" value="UniProtKB-UniRule"/>
</dbReference>
<dbReference type="CDD" id="cd02516">
    <property type="entry name" value="CDP-ME_synthetase"/>
    <property type="match status" value="1"/>
</dbReference>
<dbReference type="FunFam" id="3.90.550.10:FF:000003">
    <property type="entry name" value="2-C-methyl-D-erythritol 4-phosphate cytidylyltransferase"/>
    <property type="match status" value="1"/>
</dbReference>
<dbReference type="Gene3D" id="3.90.550.10">
    <property type="entry name" value="Spore Coat Polysaccharide Biosynthesis Protein SpsA, Chain A"/>
    <property type="match status" value="1"/>
</dbReference>
<dbReference type="HAMAP" id="MF_00108">
    <property type="entry name" value="IspD"/>
    <property type="match status" value="1"/>
</dbReference>
<dbReference type="InterPro" id="IPR001228">
    <property type="entry name" value="IspD"/>
</dbReference>
<dbReference type="InterPro" id="IPR034683">
    <property type="entry name" value="IspD/TarI"/>
</dbReference>
<dbReference type="InterPro" id="IPR050088">
    <property type="entry name" value="IspD/TarI_cytidylyltransf_bact"/>
</dbReference>
<dbReference type="InterPro" id="IPR018294">
    <property type="entry name" value="ISPD_synthase_CS"/>
</dbReference>
<dbReference type="InterPro" id="IPR029044">
    <property type="entry name" value="Nucleotide-diphossugar_trans"/>
</dbReference>
<dbReference type="NCBIfam" id="TIGR00453">
    <property type="entry name" value="ispD"/>
    <property type="match status" value="1"/>
</dbReference>
<dbReference type="PANTHER" id="PTHR32125">
    <property type="entry name" value="2-C-METHYL-D-ERYTHRITOL 4-PHOSPHATE CYTIDYLYLTRANSFERASE, CHLOROPLASTIC"/>
    <property type="match status" value="1"/>
</dbReference>
<dbReference type="PANTHER" id="PTHR32125:SF4">
    <property type="entry name" value="2-C-METHYL-D-ERYTHRITOL 4-PHOSPHATE CYTIDYLYLTRANSFERASE, CHLOROPLASTIC"/>
    <property type="match status" value="1"/>
</dbReference>
<dbReference type="Pfam" id="PF01128">
    <property type="entry name" value="IspD"/>
    <property type="match status" value="1"/>
</dbReference>
<dbReference type="SUPFAM" id="SSF53448">
    <property type="entry name" value="Nucleotide-diphospho-sugar transferases"/>
    <property type="match status" value="1"/>
</dbReference>
<dbReference type="PROSITE" id="PS01295">
    <property type="entry name" value="ISPD"/>
    <property type="match status" value="1"/>
</dbReference>
<gene>
    <name evidence="1" type="primary">ispD</name>
    <name type="ordered locus">SG0526</name>
</gene>
<feature type="chain" id="PRO_0000237822" description="2-C-methyl-D-erythritol 4-phosphate cytidylyltransferase">
    <location>
        <begin position="1"/>
        <end position="239"/>
    </location>
</feature>
<feature type="site" description="Transition state stabilizer" evidence="1">
    <location>
        <position position="23"/>
    </location>
</feature>
<feature type="site" description="Transition state stabilizer" evidence="1">
    <location>
        <position position="30"/>
    </location>
</feature>
<feature type="site" description="Positions MEP for the nucleophilic attack" evidence="1">
    <location>
        <position position="160"/>
    </location>
</feature>
<feature type="site" description="Positions MEP for the nucleophilic attack" evidence="1">
    <location>
        <position position="216"/>
    </location>
</feature>
<keyword id="KW-0414">Isoprene biosynthesis</keyword>
<keyword id="KW-0548">Nucleotidyltransferase</keyword>
<keyword id="KW-0808">Transferase</keyword>
<proteinExistence type="inferred from homology"/>
<evidence type="ECO:0000255" key="1">
    <source>
        <dbReference type="HAMAP-Rule" id="MF_00108"/>
    </source>
</evidence>
<name>ISPD_SODGM</name>
<protein>
    <recommendedName>
        <fullName evidence="1">2-C-methyl-D-erythritol 4-phosphate cytidylyltransferase</fullName>
        <ecNumber evidence="1">2.7.7.60</ecNumber>
    </recommendedName>
    <alternativeName>
        <fullName evidence="1">4-diphosphocytidyl-2C-methyl-D-erythritol synthase</fullName>
    </alternativeName>
    <alternativeName>
        <fullName evidence="1">MEP cytidylyltransferase</fullName>
        <shortName evidence="1">MCT</shortName>
    </alternativeName>
</protein>
<comment type="function">
    <text evidence="1">Catalyzes the formation of 4-diphosphocytidyl-2-C-methyl-D-erythritol from CTP and 2-C-methyl-D-erythritol 4-phosphate (MEP).</text>
</comment>
<comment type="catalytic activity">
    <reaction evidence="1">
        <text>2-C-methyl-D-erythritol 4-phosphate + CTP + H(+) = 4-CDP-2-C-methyl-D-erythritol + diphosphate</text>
        <dbReference type="Rhea" id="RHEA:13429"/>
        <dbReference type="ChEBI" id="CHEBI:15378"/>
        <dbReference type="ChEBI" id="CHEBI:33019"/>
        <dbReference type="ChEBI" id="CHEBI:37563"/>
        <dbReference type="ChEBI" id="CHEBI:57823"/>
        <dbReference type="ChEBI" id="CHEBI:58262"/>
        <dbReference type="EC" id="2.7.7.60"/>
    </reaction>
</comment>
<comment type="pathway">
    <text evidence="1">Isoprenoid biosynthesis; isopentenyl diphosphate biosynthesis via DXP pathway; isopentenyl diphosphate from 1-deoxy-D-xylulose 5-phosphate: step 2/6.</text>
</comment>
<comment type="subunit">
    <text evidence="1">Homodimer.</text>
</comment>
<comment type="similarity">
    <text evidence="1">Belongs to the IspD/TarI cytidylyltransferase family. IspD subfamily.</text>
</comment>